<evidence type="ECO:0000255" key="1">
    <source>
        <dbReference type="HAMAP-Rule" id="MF_00373"/>
    </source>
</evidence>
<evidence type="ECO:0000256" key="2">
    <source>
        <dbReference type="SAM" id="MobiDB-lite"/>
    </source>
</evidence>
<evidence type="ECO:0000305" key="3"/>
<keyword id="KW-0687">Ribonucleoprotein</keyword>
<keyword id="KW-0689">Ribosomal protein</keyword>
<accession>B7HDY1</accession>
<name>RL28_BACC4</name>
<comment type="similarity">
    <text evidence="1">Belongs to the bacterial ribosomal protein bL28 family.</text>
</comment>
<reference key="1">
    <citation type="submission" date="2008-10" db="EMBL/GenBank/DDBJ databases">
        <title>Genome sequence of Bacillus cereus B4264.</title>
        <authorList>
            <person name="Dodson R.J."/>
            <person name="Durkin A.S."/>
            <person name="Rosovitz M.J."/>
            <person name="Rasko D.A."/>
            <person name="Hoffmaster A."/>
            <person name="Ravel J."/>
            <person name="Sutton G."/>
        </authorList>
    </citation>
    <scope>NUCLEOTIDE SEQUENCE [LARGE SCALE GENOMIC DNA]</scope>
    <source>
        <strain>B4264</strain>
    </source>
</reference>
<protein>
    <recommendedName>
        <fullName evidence="1">Large ribosomal subunit protein bL28</fullName>
    </recommendedName>
    <alternativeName>
        <fullName evidence="3">50S ribosomal protein L28</fullName>
    </alternativeName>
</protein>
<organism>
    <name type="scientific">Bacillus cereus (strain B4264)</name>
    <dbReference type="NCBI Taxonomy" id="405532"/>
    <lineage>
        <taxon>Bacteria</taxon>
        <taxon>Bacillati</taxon>
        <taxon>Bacillota</taxon>
        <taxon>Bacilli</taxon>
        <taxon>Bacillales</taxon>
        <taxon>Bacillaceae</taxon>
        <taxon>Bacillus</taxon>
        <taxon>Bacillus cereus group</taxon>
    </lineage>
</organism>
<proteinExistence type="inferred from homology"/>
<sequence>MARVCAITGRKARSGNSRSHAMNATKRKWGANLQKVRVRIDGKVQRVYVSARALKSGKIERV</sequence>
<dbReference type="EMBL" id="CP001176">
    <property type="protein sequence ID" value="ACK62029.1"/>
    <property type="molecule type" value="Genomic_DNA"/>
</dbReference>
<dbReference type="RefSeq" id="WP_000124776.1">
    <property type="nucleotide sequence ID" value="NZ_VEHB01000002.1"/>
</dbReference>
<dbReference type="SMR" id="B7HDY1"/>
<dbReference type="GeneID" id="93007254"/>
<dbReference type="KEGG" id="bcb:BCB4264_A3957"/>
<dbReference type="HOGENOM" id="CLU_064548_7_1_9"/>
<dbReference type="Proteomes" id="UP000007096">
    <property type="component" value="Chromosome"/>
</dbReference>
<dbReference type="GO" id="GO:1990904">
    <property type="term" value="C:ribonucleoprotein complex"/>
    <property type="evidence" value="ECO:0007669"/>
    <property type="project" value="UniProtKB-KW"/>
</dbReference>
<dbReference type="GO" id="GO:0005840">
    <property type="term" value="C:ribosome"/>
    <property type="evidence" value="ECO:0007669"/>
    <property type="project" value="UniProtKB-KW"/>
</dbReference>
<dbReference type="GO" id="GO:0003735">
    <property type="term" value="F:structural constituent of ribosome"/>
    <property type="evidence" value="ECO:0007669"/>
    <property type="project" value="InterPro"/>
</dbReference>
<dbReference type="GO" id="GO:0006412">
    <property type="term" value="P:translation"/>
    <property type="evidence" value="ECO:0007669"/>
    <property type="project" value="UniProtKB-UniRule"/>
</dbReference>
<dbReference type="Gene3D" id="2.30.170.40">
    <property type="entry name" value="Ribosomal protein L28/L24"/>
    <property type="match status" value="1"/>
</dbReference>
<dbReference type="HAMAP" id="MF_00373">
    <property type="entry name" value="Ribosomal_bL28"/>
    <property type="match status" value="1"/>
</dbReference>
<dbReference type="InterPro" id="IPR050096">
    <property type="entry name" value="Bacterial_rp_bL28"/>
</dbReference>
<dbReference type="InterPro" id="IPR026569">
    <property type="entry name" value="Ribosomal_bL28"/>
</dbReference>
<dbReference type="InterPro" id="IPR034704">
    <property type="entry name" value="Ribosomal_bL28/bL31-like_sf"/>
</dbReference>
<dbReference type="InterPro" id="IPR001383">
    <property type="entry name" value="Ribosomal_bL28_bact-type"/>
</dbReference>
<dbReference type="InterPro" id="IPR037147">
    <property type="entry name" value="Ribosomal_bL28_sf"/>
</dbReference>
<dbReference type="NCBIfam" id="TIGR00009">
    <property type="entry name" value="L28"/>
    <property type="match status" value="1"/>
</dbReference>
<dbReference type="PANTHER" id="PTHR39080">
    <property type="entry name" value="50S RIBOSOMAL PROTEIN L28"/>
    <property type="match status" value="1"/>
</dbReference>
<dbReference type="PANTHER" id="PTHR39080:SF1">
    <property type="entry name" value="LARGE RIBOSOMAL SUBUNIT PROTEIN BL28A"/>
    <property type="match status" value="1"/>
</dbReference>
<dbReference type="Pfam" id="PF00830">
    <property type="entry name" value="Ribosomal_L28"/>
    <property type="match status" value="1"/>
</dbReference>
<dbReference type="SUPFAM" id="SSF143800">
    <property type="entry name" value="L28p-like"/>
    <property type="match status" value="1"/>
</dbReference>
<gene>
    <name evidence="1" type="primary">rpmB</name>
    <name type="ordered locus">BCB4264_A3957</name>
</gene>
<feature type="chain" id="PRO_1000121583" description="Large ribosomal subunit protein bL28">
    <location>
        <begin position="1"/>
        <end position="62"/>
    </location>
</feature>
<feature type="region of interest" description="Disordered" evidence="2">
    <location>
        <begin position="1"/>
        <end position="28"/>
    </location>
</feature>